<protein>
    <recommendedName>
        <fullName evidence="1">Endo-type membrane-bound lytic murein transglycosylase A</fullName>
        <ecNumber evidence="1">4.2.2.n2</ecNumber>
    </recommendedName>
    <alternativeName>
        <fullName evidence="1">Peptidoglycan lytic endotransglycosylase</fullName>
    </alternativeName>
</protein>
<proteinExistence type="inferred from homology"/>
<evidence type="ECO:0000255" key="1">
    <source>
        <dbReference type="HAMAP-Rule" id="MF_01381"/>
    </source>
</evidence>
<gene>
    <name evidence="1" type="primary">emtA</name>
    <name type="ordered locus">EFER_1762</name>
</gene>
<sequence length="203" mass="22386">MKLRWFAFLVVLLAGCATKRDYENPPWNAKVPVQRAMQWMPISQKAGAAWNVDPQLITAIIAIESGGNPNAVSKSNAVGLMQLKASTSGRDVYRRMGWSGEPTTSELKNPERNISMGAAYLNILETGPLAGIKDPQVLQYALVVSYANGAGALLRTFSSDRKKAITKINDLSADEFFDHVAKNHPAPQAPRYIWKLQRALDEM</sequence>
<dbReference type="EC" id="4.2.2.n2" evidence="1"/>
<dbReference type="EMBL" id="CU928158">
    <property type="protein sequence ID" value="CAQ89277.1"/>
    <property type="molecule type" value="Genomic_DNA"/>
</dbReference>
<dbReference type="RefSeq" id="WP_002431511.1">
    <property type="nucleotide sequence ID" value="NC_011740.1"/>
</dbReference>
<dbReference type="SMR" id="B7LSJ1"/>
<dbReference type="CAZy" id="GH23">
    <property type="family name" value="Glycoside Hydrolase Family 23"/>
</dbReference>
<dbReference type="GeneID" id="75057201"/>
<dbReference type="KEGG" id="efe:EFER_1762"/>
<dbReference type="HOGENOM" id="CLU_103257_0_0_6"/>
<dbReference type="OrthoDB" id="92254at2"/>
<dbReference type="Proteomes" id="UP000000745">
    <property type="component" value="Chromosome"/>
</dbReference>
<dbReference type="GO" id="GO:0009279">
    <property type="term" value="C:cell outer membrane"/>
    <property type="evidence" value="ECO:0007669"/>
    <property type="project" value="UniProtKB-SubCell"/>
</dbReference>
<dbReference type="GO" id="GO:0008932">
    <property type="term" value="F:lytic endotransglycosylase activity"/>
    <property type="evidence" value="ECO:0007669"/>
    <property type="project" value="InterPro"/>
</dbReference>
<dbReference type="GO" id="GO:0016998">
    <property type="term" value="P:cell wall macromolecule catabolic process"/>
    <property type="evidence" value="ECO:0007669"/>
    <property type="project" value="UniProtKB-UniRule"/>
</dbReference>
<dbReference type="GO" id="GO:0071555">
    <property type="term" value="P:cell wall organization"/>
    <property type="evidence" value="ECO:0007669"/>
    <property type="project" value="UniProtKB-KW"/>
</dbReference>
<dbReference type="GO" id="GO:0000270">
    <property type="term" value="P:peptidoglycan metabolic process"/>
    <property type="evidence" value="ECO:0007669"/>
    <property type="project" value="InterPro"/>
</dbReference>
<dbReference type="CDD" id="cd16893">
    <property type="entry name" value="LT_MltC_MltE"/>
    <property type="match status" value="1"/>
</dbReference>
<dbReference type="FunFam" id="1.10.530.10:FF:000007">
    <property type="entry name" value="Endo-type membrane-bound lytic murein transglycosylase A"/>
    <property type="match status" value="1"/>
</dbReference>
<dbReference type="Gene3D" id="1.10.530.10">
    <property type="match status" value="1"/>
</dbReference>
<dbReference type="HAMAP" id="MF_01381">
    <property type="entry name" value="EmtA"/>
    <property type="match status" value="1"/>
</dbReference>
<dbReference type="InterPro" id="IPR023946">
    <property type="entry name" value="EmtA"/>
</dbReference>
<dbReference type="InterPro" id="IPR023346">
    <property type="entry name" value="Lysozyme-like_dom_sf"/>
</dbReference>
<dbReference type="InterPro" id="IPR000189">
    <property type="entry name" value="Transglyc_AS"/>
</dbReference>
<dbReference type="InterPro" id="IPR008258">
    <property type="entry name" value="Transglycosylase_SLT_dom_1"/>
</dbReference>
<dbReference type="NCBIfam" id="NF012014">
    <property type="entry name" value="PRK15470.1"/>
    <property type="match status" value="1"/>
</dbReference>
<dbReference type="PANTHER" id="PTHR37423:SF4">
    <property type="entry name" value="ENDO-TYPE MEMBRANE-BOUND LYTIC MUREIN TRANSGLYCOSYLASE A"/>
    <property type="match status" value="1"/>
</dbReference>
<dbReference type="PANTHER" id="PTHR37423">
    <property type="entry name" value="SOLUBLE LYTIC MUREIN TRANSGLYCOSYLASE-RELATED"/>
    <property type="match status" value="1"/>
</dbReference>
<dbReference type="Pfam" id="PF01464">
    <property type="entry name" value="SLT"/>
    <property type="match status" value="1"/>
</dbReference>
<dbReference type="SUPFAM" id="SSF53955">
    <property type="entry name" value="Lysozyme-like"/>
    <property type="match status" value="1"/>
</dbReference>
<dbReference type="PROSITE" id="PS51257">
    <property type="entry name" value="PROKAR_LIPOPROTEIN"/>
    <property type="match status" value="1"/>
</dbReference>
<dbReference type="PROSITE" id="PS00922">
    <property type="entry name" value="TRANSGLYCOSYLASE"/>
    <property type="match status" value="1"/>
</dbReference>
<comment type="function">
    <text evidence="1">Murein-degrading enzyme. May play a role in recycling of muropeptides during cell elongation and/or cell division. Preferentially cleaves at a distance of more than two disaccharide units from the ends of the glycan chain.</text>
</comment>
<comment type="catalytic activity">
    <reaction evidence="1">
        <text>Endolytic cleavage of the (1-&gt;4)-beta-glycosidic linkage between N-acetylmuramic acid (MurNAc) and N-acetylglucosamine (GlcNAc) residues in peptidoglycan with concomitant formation of a 1,6-anhydrobond in the MurNAc residue.</text>
        <dbReference type="EC" id="4.2.2.n2"/>
    </reaction>
</comment>
<comment type="subcellular location">
    <subcellularLocation>
        <location evidence="1">Cell outer membrane</location>
        <topology evidence="1">Lipid-anchor</topology>
    </subcellularLocation>
</comment>
<comment type="similarity">
    <text evidence="1">Belongs to the transglycosylase Slt family.</text>
</comment>
<accession>B7LSJ1</accession>
<reference key="1">
    <citation type="journal article" date="2009" name="PLoS Genet.">
        <title>Organised genome dynamics in the Escherichia coli species results in highly diverse adaptive paths.</title>
        <authorList>
            <person name="Touchon M."/>
            <person name="Hoede C."/>
            <person name="Tenaillon O."/>
            <person name="Barbe V."/>
            <person name="Baeriswyl S."/>
            <person name="Bidet P."/>
            <person name="Bingen E."/>
            <person name="Bonacorsi S."/>
            <person name="Bouchier C."/>
            <person name="Bouvet O."/>
            <person name="Calteau A."/>
            <person name="Chiapello H."/>
            <person name="Clermont O."/>
            <person name="Cruveiller S."/>
            <person name="Danchin A."/>
            <person name="Diard M."/>
            <person name="Dossat C."/>
            <person name="Karoui M.E."/>
            <person name="Frapy E."/>
            <person name="Garry L."/>
            <person name="Ghigo J.M."/>
            <person name="Gilles A.M."/>
            <person name="Johnson J."/>
            <person name="Le Bouguenec C."/>
            <person name="Lescat M."/>
            <person name="Mangenot S."/>
            <person name="Martinez-Jehanne V."/>
            <person name="Matic I."/>
            <person name="Nassif X."/>
            <person name="Oztas S."/>
            <person name="Petit M.A."/>
            <person name="Pichon C."/>
            <person name="Rouy Z."/>
            <person name="Ruf C.S."/>
            <person name="Schneider D."/>
            <person name="Tourret J."/>
            <person name="Vacherie B."/>
            <person name="Vallenet D."/>
            <person name="Medigue C."/>
            <person name="Rocha E.P.C."/>
            <person name="Denamur E."/>
        </authorList>
    </citation>
    <scope>NUCLEOTIDE SEQUENCE [LARGE SCALE GENOMIC DNA]</scope>
    <source>
        <strain>ATCC 35469 / DSM 13698 / BCRC 15582 / CCUG 18766 / IAM 14443 / JCM 21226 / LMG 7866 / NBRC 102419 / NCTC 12128 / CDC 0568-73</strain>
    </source>
</reference>
<organism>
    <name type="scientific">Escherichia fergusonii (strain ATCC 35469 / DSM 13698 / CCUG 18766 / IAM 14443 / JCM 21226 / LMG 7866 / NBRC 102419 / NCTC 12128 / CDC 0568-73)</name>
    <dbReference type="NCBI Taxonomy" id="585054"/>
    <lineage>
        <taxon>Bacteria</taxon>
        <taxon>Pseudomonadati</taxon>
        <taxon>Pseudomonadota</taxon>
        <taxon>Gammaproteobacteria</taxon>
        <taxon>Enterobacterales</taxon>
        <taxon>Enterobacteriaceae</taxon>
        <taxon>Escherichia</taxon>
    </lineage>
</organism>
<name>EMTA_ESCF3</name>
<keyword id="KW-0998">Cell outer membrane</keyword>
<keyword id="KW-0961">Cell wall biogenesis/degradation</keyword>
<keyword id="KW-0449">Lipoprotein</keyword>
<keyword id="KW-0456">Lyase</keyword>
<keyword id="KW-0472">Membrane</keyword>
<keyword id="KW-0564">Palmitate</keyword>
<keyword id="KW-0732">Signal</keyword>
<feature type="signal peptide" evidence="1">
    <location>
        <begin position="1"/>
        <end position="15"/>
    </location>
</feature>
<feature type="chain" id="PRO_1000144956" description="Endo-type membrane-bound lytic murein transglycosylase A">
    <location>
        <begin position="16"/>
        <end position="203"/>
    </location>
</feature>
<feature type="lipid moiety-binding region" description="N-palmitoyl cysteine" evidence="1">
    <location>
        <position position="16"/>
    </location>
</feature>
<feature type="lipid moiety-binding region" description="S-diacylglycerol cysteine" evidence="1">
    <location>
        <position position="16"/>
    </location>
</feature>